<keyword id="KW-0067">ATP-binding</keyword>
<keyword id="KW-0963">Cytoplasm</keyword>
<keyword id="KW-0227">DNA damage</keyword>
<keyword id="KW-0234">DNA repair</keyword>
<keyword id="KW-0235">DNA replication</keyword>
<keyword id="KW-0238">DNA-binding</keyword>
<keyword id="KW-0547">Nucleotide-binding</keyword>
<keyword id="KW-0742">SOS response</keyword>
<comment type="function">
    <text evidence="1">The RecF protein is involved in DNA metabolism; it is required for DNA replication and normal SOS inducibility. RecF binds preferentially to single-stranded, linear DNA. It also seems to bind ATP.</text>
</comment>
<comment type="subcellular location">
    <subcellularLocation>
        <location evidence="1">Cytoplasm</location>
    </subcellularLocation>
</comment>
<comment type="similarity">
    <text evidence="1">Belongs to the RecF family.</text>
</comment>
<accession>A6TG02</accession>
<sequence>MSLTRLLIKDFRNIESADLALSPGFNFLVGANGSGKTSVLEAIYTLGHGRAFRSLQIGRVIRHEQDAFVLHGRLQGEERETAIGLTKDKQGDSKVRIDGTDGHKVAELAHLMPMQLITPEGFTLLNGGPKYRRAFLDWGCFHNEAGFFTAWSNLKRLVKQRNAALRQVSRYAQLRPWDLELIPLAEQISRWRAEYSAAIVEDMADTCQQFLPEFTLTFSFQRGWEKETDYAEVLERNFERDRMLTYTAHGPHKADFRIRADGAPVEDTLSRGQLKLLMCALRLAQGEFLTRVSGRRCLYLIDDFASELDDARRGLLSSRLKATQSQVFVSAISAEHVMDMSDKNSKMFRVEKGKITD</sequence>
<proteinExistence type="inferred from homology"/>
<reference key="1">
    <citation type="submission" date="2006-09" db="EMBL/GenBank/DDBJ databases">
        <authorList>
            <consortium name="The Klebsiella pneumonia Genome Sequencing Project"/>
            <person name="McClelland M."/>
            <person name="Sanderson E.K."/>
            <person name="Spieth J."/>
            <person name="Clifton W.S."/>
            <person name="Latreille P."/>
            <person name="Sabo A."/>
            <person name="Pepin K."/>
            <person name="Bhonagiri V."/>
            <person name="Porwollik S."/>
            <person name="Ali J."/>
            <person name="Wilson R.K."/>
        </authorList>
    </citation>
    <scope>NUCLEOTIDE SEQUENCE [LARGE SCALE GENOMIC DNA]</scope>
    <source>
        <strain>ATCC 700721 / MGH 78578</strain>
    </source>
</reference>
<feature type="chain" id="PRO_1000048528" description="DNA replication and repair protein RecF">
    <location>
        <begin position="1"/>
        <end position="357"/>
    </location>
</feature>
<feature type="binding site" evidence="1">
    <location>
        <begin position="30"/>
        <end position="37"/>
    </location>
    <ligand>
        <name>ATP</name>
        <dbReference type="ChEBI" id="CHEBI:30616"/>
    </ligand>
</feature>
<name>RECF_KLEP7</name>
<evidence type="ECO:0000255" key="1">
    <source>
        <dbReference type="HAMAP-Rule" id="MF_00365"/>
    </source>
</evidence>
<dbReference type="EMBL" id="CP000647">
    <property type="protein sequence ID" value="ABR79486.1"/>
    <property type="molecule type" value="Genomic_DNA"/>
</dbReference>
<dbReference type="RefSeq" id="WP_004151532.1">
    <property type="nucleotide sequence ID" value="NC_009648.1"/>
</dbReference>
<dbReference type="SMR" id="A6TG02"/>
<dbReference type="STRING" id="272620.KPN_04103"/>
<dbReference type="PaxDb" id="272620-KPN_04103"/>
<dbReference type="EnsemblBacteria" id="ABR79486">
    <property type="protein sequence ID" value="ABR79486"/>
    <property type="gene ID" value="KPN_04103"/>
</dbReference>
<dbReference type="KEGG" id="kpn:KPN_04103"/>
<dbReference type="HOGENOM" id="CLU_040267_0_0_6"/>
<dbReference type="Proteomes" id="UP000000265">
    <property type="component" value="Chromosome"/>
</dbReference>
<dbReference type="GO" id="GO:0005737">
    <property type="term" value="C:cytoplasm"/>
    <property type="evidence" value="ECO:0007669"/>
    <property type="project" value="UniProtKB-SubCell"/>
</dbReference>
<dbReference type="GO" id="GO:0005524">
    <property type="term" value="F:ATP binding"/>
    <property type="evidence" value="ECO:0007669"/>
    <property type="project" value="UniProtKB-UniRule"/>
</dbReference>
<dbReference type="GO" id="GO:0003697">
    <property type="term" value="F:single-stranded DNA binding"/>
    <property type="evidence" value="ECO:0007669"/>
    <property type="project" value="UniProtKB-UniRule"/>
</dbReference>
<dbReference type="GO" id="GO:0006260">
    <property type="term" value="P:DNA replication"/>
    <property type="evidence" value="ECO:0007669"/>
    <property type="project" value="UniProtKB-UniRule"/>
</dbReference>
<dbReference type="GO" id="GO:0000731">
    <property type="term" value="P:DNA synthesis involved in DNA repair"/>
    <property type="evidence" value="ECO:0007669"/>
    <property type="project" value="TreeGrafter"/>
</dbReference>
<dbReference type="GO" id="GO:0006302">
    <property type="term" value="P:double-strand break repair"/>
    <property type="evidence" value="ECO:0007669"/>
    <property type="project" value="TreeGrafter"/>
</dbReference>
<dbReference type="GO" id="GO:0009432">
    <property type="term" value="P:SOS response"/>
    <property type="evidence" value="ECO:0007669"/>
    <property type="project" value="UniProtKB-UniRule"/>
</dbReference>
<dbReference type="FunFam" id="1.20.1050.90:FF:000001">
    <property type="entry name" value="DNA replication and repair protein RecF"/>
    <property type="match status" value="1"/>
</dbReference>
<dbReference type="Gene3D" id="3.40.50.300">
    <property type="entry name" value="P-loop containing nucleotide triphosphate hydrolases"/>
    <property type="match status" value="1"/>
</dbReference>
<dbReference type="Gene3D" id="1.20.1050.90">
    <property type="entry name" value="RecF/RecN/SMC, N-terminal domain"/>
    <property type="match status" value="1"/>
</dbReference>
<dbReference type="HAMAP" id="MF_00365">
    <property type="entry name" value="RecF"/>
    <property type="match status" value="1"/>
</dbReference>
<dbReference type="InterPro" id="IPR001238">
    <property type="entry name" value="DNA-binding_RecF"/>
</dbReference>
<dbReference type="InterPro" id="IPR018078">
    <property type="entry name" value="DNA-binding_RecF_CS"/>
</dbReference>
<dbReference type="InterPro" id="IPR027417">
    <property type="entry name" value="P-loop_NTPase"/>
</dbReference>
<dbReference type="InterPro" id="IPR003395">
    <property type="entry name" value="RecF/RecN/SMC_N"/>
</dbReference>
<dbReference type="InterPro" id="IPR042174">
    <property type="entry name" value="RecF_2"/>
</dbReference>
<dbReference type="NCBIfam" id="TIGR00611">
    <property type="entry name" value="recf"/>
    <property type="match status" value="1"/>
</dbReference>
<dbReference type="PANTHER" id="PTHR32182">
    <property type="entry name" value="DNA REPLICATION AND REPAIR PROTEIN RECF"/>
    <property type="match status" value="1"/>
</dbReference>
<dbReference type="PANTHER" id="PTHR32182:SF0">
    <property type="entry name" value="DNA REPLICATION AND REPAIR PROTEIN RECF"/>
    <property type="match status" value="1"/>
</dbReference>
<dbReference type="Pfam" id="PF02463">
    <property type="entry name" value="SMC_N"/>
    <property type="match status" value="1"/>
</dbReference>
<dbReference type="SUPFAM" id="SSF52540">
    <property type="entry name" value="P-loop containing nucleoside triphosphate hydrolases"/>
    <property type="match status" value="1"/>
</dbReference>
<dbReference type="PROSITE" id="PS00617">
    <property type="entry name" value="RECF_1"/>
    <property type="match status" value="1"/>
</dbReference>
<dbReference type="PROSITE" id="PS00618">
    <property type="entry name" value="RECF_2"/>
    <property type="match status" value="1"/>
</dbReference>
<organism>
    <name type="scientific">Klebsiella pneumoniae subsp. pneumoniae (strain ATCC 700721 / MGH 78578)</name>
    <dbReference type="NCBI Taxonomy" id="272620"/>
    <lineage>
        <taxon>Bacteria</taxon>
        <taxon>Pseudomonadati</taxon>
        <taxon>Pseudomonadota</taxon>
        <taxon>Gammaproteobacteria</taxon>
        <taxon>Enterobacterales</taxon>
        <taxon>Enterobacteriaceae</taxon>
        <taxon>Klebsiella/Raoultella group</taxon>
        <taxon>Klebsiella</taxon>
        <taxon>Klebsiella pneumoniae complex</taxon>
    </lineage>
</organism>
<protein>
    <recommendedName>
        <fullName evidence="1">DNA replication and repair protein RecF</fullName>
    </recommendedName>
</protein>
<gene>
    <name evidence="1" type="primary">recF</name>
    <name type="ordered locus">KPN78578_40620</name>
    <name type="ORF">KPN_04103</name>
</gene>